<keyword id="KW-0378">Hydrolase</keyword>
<keyword id="KW-0539">Nucleus</keyword>
<keyword id="KW-0645">Protease</keyword>
<keyword id="KW-1185">Reference proteome</keyword>
<keyword id="KW-0788">Thiol protease</keyword>
<keyword id="KW-0804">Transcription</keyword>
<keyword id="KW-0805">Transcription regulation</keyword>
<keyword id="KW-0833">Ubl conjugation pathway</keyword>
<accession>Q8LQ36</accession>
<accession>Q0JHP3</accession>
<reference key="1">
    <citation type="journal article" date="2002" name="Nature">
        <title>The genome sequence and structure of rice chromosome 1.</title>
        <authorList>
            <person name="Sasaki T."/>
            <person name="Matsumoto T."/>
            <person name="Yamamoto K."/>
            <person name="Sakata K."/>
            <person name="Baba T."/>
            <person name="Katayose Y."/>
            <person name="Wu J."/>
            <person name="Niimura Y."/>
            <person name="Cheng Z."/>
            <person name="Nagamura Y."/>
            <person name="Antonio B.A."/>
            <person name="Kanamori H."/>
            <person name="Hosokawa S."/>
            <person name="Masukawa M."/>
            <person name="Arikawa K."/>
            <person name="Chiden Y."/>
            <person name="Hayashi M."/>
            <person name="Okamoto M."/>
            <person name="Ando T."/>
            <person name="Aoki H."/>
            <person name="Arita K."/>
            <person name="Hamada M."/>
            <person name="Harada C."/>
            <person name="Hijishita S."/>
            <person name="Honda M."/>
            <person name="Ichikawa Y."/>
            <person name="Idonuma A."/>
            <person name="Iijima M."/>
            <person name="Ikeda M."/>
            <person name="Ikeno M."/>
            <person name="Ito S."/>
            <person name="Ito T."/>
            <person name="Ito Y."/>
            <person name="Ito Y."/>
            <person name="Iwabuchi A."/>
            <person name="Kamiya K."/>
            <person name="Karasawa W."/>
            <person name="Katagiri S."/>
            <person name="Kikuta A."/>
            <person name="Kobayashi N."/>
            <person name="Kono I."/>
            <person name="Machita K."/>
            <person name="Maehara T."/>
            <person name="Mizuno H."/>
            <person name="Mizubayashi T."/>
            <person name="Mukai Y."/>
            <person name="Nagasaki H."/>
            <person name="Nakashima M."/>
            <person name="Nakama Y."/>
            <person name="Nakamichi Y."/>
            <person name="Nakamura M."/>
            <person name="Namiki N."/>
            <person name="Negishi M."/>
            <person name="Ohta I."/>
            <person name="Ono N."/>
            <person name="Saji S."/>
            <person name="Sakai K."/>
            <person name="Shibata M."/>
            <person name="Shimokawa T."/>
            <person name="Shomura A."/>
            <person name="Song J."/>
            <person name="Takazaki Y."/>
            <person name="Terasawa K."/>
            <person name="Tsuji K."/>
            <person name="Waki K."/>
            <person name="Yamagata H."/>
            <person name="Yamane H."/>
            <person name="Yoshiki S."/>
            <person name="Yoshihara R."/>
            <person name="Yukawa K."/>
            <person name="Zhong H."/>
            <person name="Iwama H."/>
            <person name="Endo T."/>
            <person name="Ito H."/>
            <person name="Hahn J.H."/>
            <person name="Kim H.-I."/>
            <person name="Eun M.-Y."/>
            <person name="Yano M."/>
            <person name="Jiang J."/>
            <person name="Gojobori T."/>
        </authorList>
    </citation>
    <scope>NUCLEOTIDE SEQUENCE [LARGE SCALE GENOMIC DNA]</scope>
    <source>
        <strain>cv. Nipponbare</strain>
    </source>
</reference>
<reference key="2">
    <citation type="journal article" date="2005" name="Nature">
        <title>The map-based sequence of the rice genome.</title>
        <authorList>
            <consortium name="International rice genome sequencing project (IRGSP)"/>
        </authorList>
    </citation>
    <scope>NUCLEOTIDE SEQUENCE [LARGE SCALE GENOMIC DNA]</scope>
    <source>
        <strain>cv. Nipponbare</strain>
    </source>
</reference>
<reference key="3">
    <citation type="journal article" date="2008" name="Nucleic Acids Res.">
        <title>The rice annotation project database (RAP-DB): 2008 update.</title>
        <authorList>
            <consortium name="The rice annotation project (RAP)"/>
        </authorList>
    </citation>
    <scope>GENOME REANNOTATION</scope>
    <source>
        <strain>cv. Nipponbare</strain>
    </source>
</reference>
<reference key="4">
    <citation type="journal article" date="2013" name="Rice">
        <title>Improvement of the Oryza sativa Nipponbare reference genome using next generation sequence and optical map data.</title>
        <authorList>
            <person name="Kawahara Y."/>
            <person name="de la Bastide M."/>
            <person name="Hamilton J.P."/>
            <person name="Kanamori H."/>
            <person name="McCombie W.R."/>
            <person name="Ouyang S."/>
            <person name="Schwartz D.C."/>
            <person name="Tanaka T."/>
            <person name="Wu J."/>
            <person name="Zhou S."/>
            <person name="Childs K.L."/>
            <person name="Davidson R.M."/>
            <person name="Lin H."/>
            <person name="Quesada-Ocampo L."/>
            <person name="Vaillancourt B."/>
            <person name="Sakai H."/>
            <person name="Lee S.S."/>
            <person name="Kim J."/>
            <person name="Numa H."/>
            <person name="Itoh T."/>
            <person name="Buell C.R."/>
            <person name="Matsumoto T."/>
        </authorList>
    </citation>
    <scope>GENOME REANNOTATION</scope>
    <source>
        <strain>cv. Nipponbare</strain>
    </source>
</reference>
<sequence length="336" mass="36205">MEEAAAASNGGLLYHEVQEGKLCAVHCVNTTLQGPFFSEFDLSALAVDLDQRERQVMSEGAAGAATTAAGDFLAEGEGSHNVSLGGDFSIQVLQKALEVWDLQVIPLDSPDVGSCLFDPELETAFICHLQDHWFCIRKVNGEWYNFNSLYPAPEHLSKFYLSAFIDTLKGSGWSIFAVRGNFPKECPMATEGSNGFGQWLTPDDARRITSSCNQVQTPTQQAGVSLVADQSEEMSEMDMIAAQQEEADLNAAIAASLMDTGGPFANYAAHEESRSQDAFAIESTSGEMSKDGNLEEQGANKSETSEPNSDNIESASGSNPKQNTTSLEGKESIKED</sequence>
<comment type="function">
    <text evidence="1">Interacts with key regulators of transcription and represses transcription. Acts as a histone-binding protein that regulates transcription. Acts as a deubiquitinating enzyme (By similarity).</text>
</comment>
<comment type="catalytic activity">
    <reaction>
        <text>Thiol-dependent hydrolysis of ester, thioester, amide, peptide and isopeptide bonds formed by the C-terminal Gly of ubiquitin (a 76-residue protein attached to proteins as an intracellular targeting signal).</text>
        <dbReference type="EC" id="3.4.19.12"/>
    </reaction>
</comment>
<comment type="subcellular location">
    <subcellularLocation>
        <location evidence="1">Nucleus</location>
    </subcellularLocation>
</comment>
<feature type="chain" id="PRO_0000053837" description="Putative ataxin-3 homolog">
    <location>
        <begin position="1"/>
        <end position="336"/>
    </location>
</feature>
<feature type="domain" description="Josephin" evidence="2">
    <location>
        <begin position="10"/>
        <end position="193"/>
    </location>
</feature>
<feature type="domain" description="UIM" evidence="4">
    <location>
        <begin position="244"/>
        <end position="263"/>
    </location>
</feature>
<feature type="region of interest" description="Disordered" evidence="3">
    <location>
        <begin position="281"/>
        <end position="336"/>
    </location>
</feature>
<feature type="compositionally biased region" description="Polar residues" evidence="3">
    <location>
        <begin position="299"/>
        <end position="327"/>
    </location>
</feature>
<feature type="active site" description="Nucleophile" evidence="2">
    <location>
        <position position="23"/>
    </location>
</feature>
<feature type="active site" description="Proton acceptor" evidence="2">
    <location>
        <position position="132"/>
    </location>
</feature>
<feature type="active site" evidence="2">
    <location>
        <position position="147"/>
    </location>
</feature>
<protein>
    <recommendedName>
        <fullName>Putative ataxin-3 homolog</fullName>
        <ecNumber>3.4.19.12</ecNumber>
    </recommendedName>
</protein>
<name>ATX3_ORYSJ</name>
<gene>
    <name type="ordered locus">Os01g0851400</name>
    <name type="ordered locus">LOC_Os01g63250</name>
    <name type="ORF">P0529H11.31</name>
</gene>
<proteinExistence type="inferred from homology"/>
<dbReference type="EC" id="3.4.19.12"/>
<dbReference type="EMBL" id="AP004072">
    <property type="protein sequence ID" value="BAB92851.1"/>
    <property type="molecule type" value="Genomic_DNA"/>
</dbReference>
<dbReference type="EMBL" id="AP008207">
    <property type="protein sequence ID" value="BAF06735.2"/>
    <property type="molecule type" value="Genomic_DNA"/>
</dbReference>
<dbReference type="EMBL" id="AP014957">
    <property type="protein sequence ID" value="BAS75251.1"/>
    <property type="molecule type" value="Genomic_DNA"/>
</dbReference>
<dbReference type="RefSeq" id="XP_015614266.1">
    <property type="nucleotide sequence ID" value="XM_015758780.1"/>
</dbReference>
<dbReference type="SMR" id="Q8LQ36"/>
<dbReference type="FunCoup" id="Q8LQ36">
    <property type="interactions" value="643"/>
</dbReference>
<dbReference type="STRING" id="39947.Q8LQ36"/>
<dbReference type="MEROPS" id="C86.A01"/>
<dbReference type="PaxDb" id="39947-Q8LQ36"/>
<dbReference type="EnsemblPlants" id="Os01t0851400-01">
    <property type="protein sequence ID" value="Os01t0851400-01"/>
    <property type="gene ID" value="Os01g0851400"/>
</dbReference>
<dbReference type="Gramene" id="Os01t0851400-01">
    <property type="protein sequence ID" value="Os01t0851400-01"/>
    <property type="gene ID" value="Os01g0851400"/>
</dbReference>
<dbReference type="KEGG" id="dosa:Os01g0851400"/>
<dbReference type="eggNOG" id="KOG2935">
    <property type="taxonomic scope" value="Eukaryota"/>
</dbReference>
<dbReference type="HOGENOM" id="CLU_031228_0_1_1"/>
<dbReference type="InParanoid" id="Q8LQ36"/>
<dbReference type="OMA" id="CKERQMM"/>
<dbReference type="OrthoDB" id="10063692at2759"/>
<dbReference type="Proteomes" id="UP000000763">
    <property type="component" value="Chromosome 1"/>
</dbReference>
<dbReference type="Proteomes" id="UP000059680">
    <property type="component" value="Chromosome 1"/>
</dbReference>
<dbReference type="GO" id="GO:0005634">
    <property type="term" value="C:nucleus"/>
    <property type="evidence" value="ECO:0000318"/>
    <property type="project" value="GO_Central"/>
</dbReference>
<dbReference type="GO" id="GO:0004843">
    <property type="term" value="F:cysteine-type deubiquitinase activity"/>
    <property type="evidence" value="ECO:0000318"/>
    <property type="project" value="GO_Central"/>
</dbReference>
<dbReference type="GO" id="GO:1904262">
    <property type="term" value="P:negative regulation of TORC1 signaling"/>
    <property type="evidence" value="ECO:0000318"/>
    <property type="project" value="GO_Central"/>
</dbReference>
<dbReference type="GO" id="GO:1904294">
    <property type="term" value="P:positive regulation of ERAD pathway"/>
    <property type="evidence" value="ECO:0000318"/>
    <property type="project" value="GO_Central"/>
</dbReference>
<dbReference type="GO" id="GO:0043161">
    <property type="term" value="P:proteasome-mediated ubiquitin-dependent protein catabolic process"/>
    <property type="evidence" value="ECO:0000318"/>
    <property type="project" value="GO_Central"/>
</dbReference>
<dbReference type="GO" id="GO:0016579">
    <property type="term" value="P:protein deubiquitination"/>
    <property type="evidence" value="ECO:0007669"/>
    <property type="project" value="InterPro"/>
</dbReference>
<dbReference type="GO" id="GO:0006515">
    <property type="term" value="P:protein quality control for misfolded or incompletely synthesized proteins"/>
    <property type="evidence" value="ECO:0000318"/>
    <property type="project" value="GO_Central"/>
</dbReference>
<dbReference type="FunFam" id="1.10.287.10:FF:000012">
    <property type="entry name" value="Ataxin-3 homolog"/>
    <property type="match status" value="1"/>
</dbReference>
<dbReference type="FunFam" id="3.90.70.40:FF:000004">
    <property type="entry name" value="ataxin-3 homolog"/>
    <property type="match status" value="1"/>
</dbReference>
<dbReference type="Gene3D" id="3.90.70.40">
    <property type="match status" value="1"/>
</dbReference>
<dbReference type="Gene3D" id="1.10.287.10">
    <property type="entry name" value="S15/NS1, RNA-binding"/>
    <property type="match status" value="1"/>
</dbReference>
<dbReference type="InterPro" id="IPR033865">
    <property type="entry name" value="Ataxin-3"/>
</dbReference>
<dbReference type="InterPro" id="IPR006155">
    <property type="entry name" value="Josephin"/>
</dbReference>
<dbReference type="PANTHER" id="PTHR14159">
    <property type="entry name" value="ATAXIN-3-RELATED"/>
    <property type="match status" value="1"/>
</dbReference>
<dbReference type="PANTHER" id="PTHR14159:SF0">
    <property type="entry name" value="ATAXIN-3-RELATED"/>
    <property type="match status" value="1"/>
</dbReference>
<dbReference type="Pfam" id="PF02099">
    <property type="entry name" value="Josephin"/>
    <property type="match status" value="1"/>
</dbReference>
<dbReference type="PRINTS" id="PR01233">
    <property type="entry name" value="JOSEPHIN"/>
</dbReference>
<dbReference type="SMART" id="SM01246">
    <property type="entry name" value="Josephin"/>
    <property type="match status" value="1"/>
</dbReference>
<dbReference type="PROSITE" id="PS50957">
    <property type="entry name" value="JOSEPHIN"/>
    <property type="match status" value="1"/>
</dbReference>
<organism>
    <name type="scientific">Oryza sativa subsp. japonica</name>
    <name type="common">Rice</name>
    <dbReference type="NCBI Taxonomy" id="39947"/>
    <lineage>
        <taxon>Eukaryota</taxon>
        <taxon>Viridiplantae</taxon>
        <taxon>Streptophyta</taxon>
        <taxon>Embryophyta</taxon>
        <taxon>Tracheophyta</taxon>
        <taxon>Spermatophyta</taxon>
        <taxon>Magnoliopsida</taxon>
        <taxon>Liliopsida</taxon>
        <taxon>Poales</taxon>
        <taxon>Poaceae</taxon>
        <taxon>BOP clade</taxon>
        <taxon>Oryzoideae</taxon>
        <taxon>Oryzeae</taxon>
        <taxon>Oryzinae</taxon>
        <taxon>Oryza</taxon>
        <taxon>Oryza sativa</taxon>
    </lineage>
</organism>
<evidence type="ECO:0000250" key="1"/>
<evidence type="ECO:0000255" key="2">
    <source>
        <dbReference type="PROSITE-ProRule" id="PRU00331"/>
    </source>
</evidence>
<evidence type="ECO:0000256" key="3">
    <source>
        <dbReference type="SAM" id="MobiDB-lite"/>
    </source>
</evidence>
<evidence type="ECO:0000305" key="4"/>